<reference key="1">
    <citation type="journal article" date="2004" name="Proc. Natl. Acad. Sci. U.S.A.">
        <title>Insights into the evolution of Yersinia pestis through whole-genome comparison with Yersinia pseudotuberculosis.</title>
        <authorList>
            <person name="Chain P.S.G."/>
            <person name="Carniel E."/>
            <person name="Larimer F.W."/>
            <person name="Lamerdin J."/>
            <person name="Stoutland P.O."/>
            <person name="Regala W.M."/>
            <person name="Georgescu A.M."/>
            <person name="Vergez L.M."/>
            <person name="Land M.L."/>
            <person name="Motin V.L."/>
            <person name="Brubaker R.R."/>
            <person name="Fowler J."/>
            <person name="Hinnebusch J."/>
            <person name="Marceau M."/>
            <person name="Medigue C."/>
            <person name="Simonet M."/>
            <person name="Chenal-Francisque V."/>
            <person name="Souza B."/>
            <person name="Dacheux D."/>
            <person name="Elliott J.M."/>
            <person name="Derbise A."/>
            <person name="Hauser L.J."/>
            <person name="Garcia E."/>
        </authorList>
    </citation>
    <scope>NUCLEOTIDE SEQUENCE [LARGE SCALE GENOMIC DNA]</scope>
    <source>
        <strain>IP32953</strain>
    </source>
</reference>
<keyword id="KW-0067">ATP-binding</keyword>
<keyword id="KW-0436">Ligase</keyword>
<keyword id="KW-0460">Magnesium</keyword>
<keyword id="KW-0479">Metal-binding</keyword>
<keyword id="KW-0547">Nucleotide-binding</keyword>
<keyword id="KW-0658">Purine biosynthesis</keyword>
<protein>
    <recommendedName>
        <fullName evidence="1">Formate-dependent phosphoribosylglycinamide formyltransferase</fullName>
        <ecNumber evidence="1">6.3.1.21</ecNumber>
    </recommendedName>
    <alternativeName>
        <fullName evidence="1">5'-phosphoribosylglycinamide transformylase 2</fullName>
    </alternativeName>
    <alternativeName>
        <fullName evidence="1">Formate-dependent GAR transformylase</fullName>
    </alternativeName>
    <alternativeName>
        <fullName evidence="1">GAR transformylase 2</fullName>
        <shortName evidence="1">GART 2</shortName>
    </alternativeName>
    <alternativeName>
        <fullName evidence="1">Non-folate glycinamide ribonucleotide transformylase</fullName>
    </alternativeName>
    <alternativeName>
        <fullName evidence="1">Phosphoribosylglycinamide formyltransferase 2</fullName>
    </alternativeName>
</protein>
<proteinExistence type="inferred from homology"/>
<sequence length="393" mass="42511">MLTIGTALRPGATRVMLLGAGELGKEVAIECQRLGLEVIAVDRYADAPAMHVAHRSHVINMLDGAALKQLVAQEKPHYIVPEIEAIATDMLVELEKMGQHVVPCAEATRLTMNREGIRRLAAETLQLPTSSYRFADTDSAFFQAVRDIGYPCIVKPVMSSSGKGQSLIRSEEHLQAAWEYAQQGGRAGSGRVIIEGLVHFDFEITLLTIRAVDGIHFCAPIGHRQEDGDYRESWQPQAMSDIALQRAKEISAQVVTALGGFGLFGVELFVCGDDVIFSEVSPRPHDTGMVTLISQNMSEFALHVRAFLGLPIGTIRQYGAAASAVILPELTSQNITYRGLETALIGDTQIRLFGKPEIAGQRRLGVALAVADNIETAIEVAKKAAGNIEVSGE</sequence>
<evidence type="ECO:0000255" key="1">
    <source>
        <dbReference type="HAMAP-Rule" id="MF_01643"/>
    </source>
</evidence>
<comment type="function">
    <text evidence="1">Involved in the de novo purine biosynthesis. Catalyzes the transfer of formate to 5-phospho-ribosyl-glycinamide (GAR), producing 5-phospho-ribosyl-N-formylglycinamide (FGAR). Formate is provided by PurU via hydrolysis of 10-formyl-tetrahydrofolate.</text>
</comment>
<comment type="catalytic activity">
    <reaction evidence="1">
        <text>N(1)-(5-phospho-beta-D-ribosyl)glycinamide + formate + ATP = N(2)-formyl-N(1)-(5-phospho-beta-D-ribosyl)glycinamide + ADP + phosphate + H(+)</text>
        <dbReference type="Rhea" id="RHEA:24829"/>
        <dbReference type="ChEBI" id="CHEBI:15378"/>
        <dbReference type="ChEBI" id="CHEBI:15740"/>
        <dbReference type="ChEBI" id="CHEBI:30616"/>
        <dbReference type="ChEBI" id="CHEBI:43474"/>
        <dbReference type="ChEBI" id="CHEBI:143788"/>
        <dbReference type="ChEBI" id="CHEBI:147286"/>
        <dbReference type="ChEBI" id="CHEBI:456216"/>
        <dbReference type="EC" id="6.3.1.21"/>
    </reaction>
    <physiologicalReaction direction="left-to-right" evidence="1">
        <dbReference type="Rhea" id="RHEA:24830"/>
    </physiologicalReaction>
</comment>
<comment type="pathway">
    <text evidence="1">Purine metabolism; IMP biosynthesis via de novo pathway; N(2)-formyl-N(1)-(5-phospho-D-ribosyl)glycinamide from N(1)-(5-phospho-D-ribosyl)glycinamide (formate route): step 1/1.</text>
</comment>
<comment type="subunit">
    <text evidence="1">Homodimer.</text>
</comment>
<comment type="similarity">
    <text evidence="1">Belongs to the PurK/PurT family.</text>
</comment>
<name>PURT_YERPS</name>
<feature type="chain" id="PRO_0000319275" description="Formate-dependent phosphoribosylglycinamide formyltransferase">
    <location>
        <begin position="1"/>
        <end position="393"/>
    </location>
</feature>
<feature type="domain" description="ATP-grasp" evidence="1">
    <location>
        <begin position="119"/>
        <end position="308"/>
    </location>
</feature>
<feature type="binding site" evidence="1">
    <location>
        <begin position="22"/>
        <end position="23"/>
    </location>
    <ligand>
        <name>N(1)-(5-phospho-beta-D-ribosyl)glycinamide</name>
        <dbReference type="ChEBI" id="CHEBI:143788"/>
    </ligand>
</feature>
<feature type="binding site" evidence="1">
    <location>
        <position position="82"/>
    </location>
    <ligand>
        <name>N(1)-(5-phospho-beta-D-ribosyl)glycinamide</name>
        <dbReference type="ChEBI" id="CHEBI:143788"/>
    </ligand>
</feature>
<feature type="binding site" evidence="1">
    <location>
        <position position="114"/>
    </location>
    <ligand>
        <name>ATP</name>
        <dbReference type="ChEBI" id="CHEBI:30616"/>
    </ligand>
</feature>
<feature type="binding site" evidence="1">
    <location>
        <position position="155"/>
    </location>
    <ligand>
        <name>ATP</name>
        <dbReference type="ChEBI" id="CHEBI:30616"/>
    </ligand>
</feature>
<feature type="binding site" evidence="1">
    <location>
        <begin position="160"/>
        <end position="165"/>
    </location>
    <ligand>
        <name>ATP</name>
        <dbReference type="ChEBI" id="CHEBI:30616"/>
    </ligand>
</feature>
<feature type="binding site" evidence="1">
    <location>
        <begin position="195"/>
        <end position="198"/>
    </location>
    <ligand>
        <name>ATP</name>
        <dbReference type="ChEBI" id="CHEBI:30616"/>
    </ligand>
</feature>
<feature type="binding site" evidence="1">
    <location>
        <position position="203"/>
    </location>
    <ligand>
        <name>ATP</name>
        <dbReference type="ChEBI" id="CHEBI:30616"/>
    </ligand>
</feature>
<feature type="binding site" evidence="1">
    <location>
        <position position="267"/>
    </location>
    <ligand>
        <name>Mg(2+)</name>
        <dbReference type="ChEBI" id="CHEBI:18420"/>
    </ligand>
</feature>
<feature type="binding site" evidence="1">
    <location>
        <position position="279"/>
    </location>
    <ligand>
        <name>Mg(2+)</name>
        <dbReference type="ChEBI" id="CHEBI:18420"/>
    </ligand>
</feature>
<feature type="binding site" evidence="1">
    <location>
        <position position="286"/>
    </location>
    <ligand>
        <name>N(1)-(5-phospho-beta-D-ribosyl)glycinamide</name>
        <dbReference type="ChEBI" id="CHEBI:143788"/>
    </ligand>
</feature>
<feature type="binding site" evidence="1">
    <location>
        <position position="355"/>
    </location>
    <ligand>
        <name>N(1)-(5-phospho-beta-D-ribosyl)glycinamide</name>
        <dbReference type="ChEBI" id="CHEBI:143788"/>
    </ligand>
</feature>
<feature type="binding site" evidence="1">
    <location>
        <begin position="362"/>
        <end position="363"/>
    </location>
    <ligand>
        <name>N(1)-(5-phospho-beta-D-ribosyl)glycinamide</name>
        <dbReference type="ChEBI" id="CHEBI:143788"/>
    </ligand>
</feature>
<dbReference type="EC" id="6.3.1.21" evidence="1"/>
<dbReference type="EMBL" id="BX936398">
    <property type="protein sequence ID" value="CAH20890.1"/>
    <property type="molecule type" value="Genomic_DNA"/>
</dbReference>
<dbReference type="RefSeq" id="WP_011192155.1">
    <property type="nucleotide sequence ID" value="NC_006155.1"/>
</dbReference>
<dbReference type="SMR" id="Q66BW5"/>
<dbReference type="KEGG" id="ypo:BZ17_851"/>
<dbReference type="KEGG" id="yps:YPTB1651"/>
<dbReference type="PATRIC" id="fig|273123.14.peg.904"/>
<dbReference type="UniPathway" id="UPA00074">
    <property type="reaction ID" value="UER00127"/>
</dbReference>
<dbReference type="Proteomes" id="UP000001011">
    <property type="component" value="Chromosome"/>
</dbReference>
<dbReference type="GO" id="GO:0005829">
    <property type="term" value="C:cytosol"/>
    <property type="evidence" value="ECO:0007669"/>
    <property type="project" value="TreeGrafter"/>
</dbReference>
<dbReference type="GO" id="GO:0005524">
    <property type="term" value="F:ATP binding"/>
    <property type="evidence" value="ECO:0007669"/>
    <property type="project" value="UniProtKB-UniRule"/>
</dbReference>
<dbReference type="GO" id="GO:0000287">
    <property type="term" value="F:magnesium ion binding"/>
    <property type="evidence" value="ECO:0007669"/>
    <property type="project" value="InterPro"/>
</dbReference>
<dbReference type="GO" id="GO:0043815">
    <property type="term" value="F:phosphoribosylglycinamide formyltransferase 2 activity"/>
    <property type="evidence" value="ECO:0007669"/>
    <property type="project" value="UniProtKB-UniRule"/>
</dbReference>
<dbReference type="GO" id="GO:0004644">
    <property type="term" value="F:phosphoribosylglycinamide formyltransferase activity"/>
    <property type="evidence" value="ECO:0007669"/>
    <property type="project" value="InterPro"/>
</dbReference>
<dbReference type="GO" id="GO:0006189">
    <property type="term" value="P:'de novo' IMP biosynthetic process"/>
    <property type="evidence" value="ECO:0007669"/>
    <property type="project" value="UniProtKB-UniRule"/>
</dbReference>
<dbReference type="FunFam" id="3.30.1490.20:FF:000013">
    <property type="entry name" value="Formate-dependent phosphoribosylglycinamide formyltransferase"/>
    <property type="match status" value="1"/>
</dbReference>
<dbReference type="FunFam" id="3.30.470.20:FF:000027">
    <property type="entry name" value="Formate-dependent phosphoribosylglycinamide formyltransferase"/>
    <property type="match status" value="1"/>
</dbReference>
<dbReference type="FunFam" id="3.40.50.20:FF:000007">
    <property type="entry name" value="Formate-dependent phosphoribosylglycinamide formyltransferase"/>
    <property type="match status" value="1"/>
</dbReference>
<dbReference type="Gene3D" id="3.40.50.20">
    <property type="match status" value="1"/>
</dbReference>
<dbReference type="Gene3D" id="3.30.1490.20">
    <property type="entry name" value="ATP-grasp fold, A domain"/>
    <property type="match status" value="1"/>
</dbReference>
<dbReference type="Gene3D" id="3.30.470.20">
    <property type="entry name" value="ATP-grasp fold, B domain"/>
    <property type="match status" value="1"/>
</dbReference>
<dbReference type="HAMAP" id="MF_01643">
    <property type="entry name" value="PurT"/>
    <property type="match status" value="1"/>
</dbReference>
<dbReference type="InterPro" id="IPR011761">
    <property type="entry name" value="ATP-grasp"/>
</dbReference>
<dbReference type="InterPro" id="IPR003135">
    <property type="entry name" value="ATP-grasp_carboxylate-amine"/>
</dbReference>
<dbReference type="InterPro" id="IPR013815">
    <property type="entry name" value="ATP_grasp_subdomain_1"/>
</dbReference>
<dbReference type="InterPro" id="IPR016185">
    <property type="entry name" value="PreATP-grasp_dom_sf"/>
</dbReference>
<dbReference type="InterPro" id="IPR005862">
    <property type="entry name" value="PurT"/>
</dbReference>
<dbReference type="InterPro" id="IPR054350">
    <property type="entry name" value="PurT/PurK_preATP-grasp"/>
</dbReference>
<dbReference type="InterPro" id="IPR048740">
    <property type="entry name" value="PurT_C"/>
</dbReference>
<dbReference type="InterPro" id="IPR011054">
    <property type="entry name" value="Rudment_hybrid_motif"/>
</dbReference>
<dbReference type="NCBIfam" id="NF006766">
    <property type="entry name" value="PRK09288.1"/>
    <property type="match status" value="1"/>
</dbReference>
<dbReference type="NCBIfam" id="TIGR01142">
    <property type="entry name" value="purT"/>
    <property type="match status" value="1"/>
</dbReference>
<dbReference type="PANTHER" id="PTHR43055">
    <property type="entry name" value="FORMATE-DEPENDENT PHOSPHORIBOSYLGLYCINAMIDE FORMYLTRANSFERASE"/>
    <property type="match status" value="1"/>
</dbReference>
<dbReference type="PANTHER" id="PTHR43055:SF1">
    <property type="entry name" value="FORMATE-DEPENDENT PHOSPHORIBOSYLGLYCINAMIDE FORMYLTRANSFERASE"/>
    <property type="match status" value="1"/>
</dbReference>
<dbReference type="Pfam" id="PF02222">
    <property type="entry name" value="ATP-grasp"/>
    <property type="match status" value="1"/>
</dbReference>
<dbReference type="Pfam" id="PF21244">
    <property type="entry name" value="PurT_C"/>
    <property type="match status" value="1"/>
</dbReference>
<dbReference type="Pfam" id="PF22660">
    <property type="entry name" value="RS_preATP-grasp-like"/>
    <property type="match status" value="1"/>
</dbReference>
<dbReference type="SUPFAM" id="SSF56059">
    <property type="entry name" value="Glutathione synthetase ATP-binding domain-like"/>
    <property type="match status" value="1"/>
</dbReference>
<dbReference type="SUPFAM" id="SSF52440">
    <property type="entry name" value="PreATP-grasp domain"/>
    <property type="match status" value="1"/>
</dbReference>
<dbReference type="SUPFAM" id="SSF51246">
    <property type="entry name" value="Rudiment single hybrid motif"/>
    <property type="match status" value="1"/>
</dbReference>
<dbReference type="PROSITE" id="PS50975">
    <property type="entry name" value="ATP_GRASP"/>
    <property type="match status" value="1"/>
</dbReference>
<gene>
    <name evidence="1" type="primary">purT</name>
    <name type="ordered locus">YPTB1651</name>
</gene>
<accession>Q66BW5</accession>
<organism>
    <name type="scientific">Yersinia pseudotuberculosis serotype I (strain IP32953)</name>
    <dbReference type="NCBI Taxonomy" id="273123"/>
    <lineage>
        <taxon>Bacteria</taxon>
        <taxon>Pseudomonadati</taxon>
        <taxon>Pseudomonadota</taxon>
        <taxon>Gammaproteobacteria</taxon>
        <taxon>Enterobacterales</taxon>
        <taxon>Yersiniaceae</taxon>
        <taxon>Yersinia</taxon>
    </lineage>
</organism>